<organismHost>
    <name type="scientific">Canis lupus familiaris</name>
    <name type="common">Dog</name>
    <name type="synonym">Canis familiaris</name>
    <dbReference type="NCBI Taxonomy" id="9615"/>
</organismHost>
<protein>
    <recommendedName>
        <fullName>Early E3 25 kDa glycoprotein</fullName>
    </recommendedName>
</protein>
<sequence>MAMTEESVDQVEVNCLCVQHGQSCNNTRCFVKEGLRANWFYNPVLEEFAIPDSYQEGHGVNVKITFSHRSRNTGQIPLCLSNGTCHISEKGLHFSANFSKDGLYIAIINETNYHAAEHYYLVYIYENCHQMPYDSPRHTGHNGTSFNWSMGLWLVKCSHNKTFFLPFVLDSAKSAPIIMTETAITIYISMIFLIVSLLTFLNVLITLNNKYKHYGV</sequence>
<proteinExistence type="predicted"/>
<dbReference type="EMBL" id="U55001">
    <property type="protein sequence ID" value="AAB05449.1"/>
    <property type="molecule type" value="Genomic_DNA"/>
</dbReference>
<keyword id="KW-0244">Early protein</keyword>
<keyword id="KW-0325">Glycoprotein</keyword>
<reference key="1">
    <citation type="journal article" date="1991" name="Virology">
        <title>Sequence analysis of putative E3 and fiber genomic regions of two strains of canine adenovirus type 1.</title>
        <authorList>
            <person name="Dragulev B.P."/>
            <person name="Sira S."/>
            <person name="Abouhaidar M.G."/>
            <person name="Campbell J.B."/>
        </authorList>
    </citation>
    <scope>NUCLEOTIDE SEQUENCE [GENOMIC DNA]</scope>
</reference>
<reference key="2">
    <citation type="submission" date="1996-08" db="EMBL/GenBank/DDBJ databases">
        <title>DNA sequence and genomic organization of canine adenovirus type 1.</title>
        <authorList>
            <person name="Campbell J.B."/>
            <person name="Zhao Y."/>
        </authorList>
    </citation>
    <scope>NUCLEOTIDE SEQUENCE [LARGE SCALE GENOMIC DNA]</scope>
</reference>
<organism>
    <name type="scientific">Canine adenovirus serotype 1 (strain CLL)</name>
    <name type="common">CAdV-1</name>
    <name type="synonym">Canine adenovirus 1 (strain CLL)</name>
    <dbReference type="NCBI Taxonomy" id="69150"/>
    <lineage>
        <taxon>Viruses</taxon>
        <taxon>Varidnaviria</taxon>
        <taxon>Bamfordvirae</taxon>
        <taxon>Preplasmiviricota</taxon>
        <taxon>Tectiliviricetes</taxon>
        <taxon>Rowavirales</taxon>
        <taxon>Adenoviridae</taxon>
        <taxon>Mastadenovirus</taxon>
        <taxon>Canine mastadenovirus A</taxon>
    </lineage>
</organism>
<feature type="chain" id="PRO_0000221763" description="Early E3 25 kDa glycoprotein">
    <location>
        <begin position="1"/>
        <end position="216"/>
    </location>
</feature>
<feature type="glycosylation site" description="N-linked (GlcNAc...) asparagine; by host" evidence="1">
    <location>
        <position position="25"/>
    </location>
</feature>
<feature type="glycosylation site" description="N-linked (GlcNAc...) asparagine; by host" evidence="1">
    <location>
        <position position="82"/>
    </location>
</feature>
<feature type="glycosylation site" description="N-linked (GlcNAc...) asparagine; by host" evidence="1">
    <location>
        <position position="97"/>
    </location>
</feature>
<feature type="glycosylation site" description="N-linked (GlcNAc...) asparagine; by host" evidence="1">
    <location>
        <position position="109"/>
    </location>
</feature>
<feature type="glycosylation site" description="N-linked (GlcNAc...) asparagine; by host" evidence="1">
    <location>
        <position position="142"/>
    </location>
</feature>
<feature type="glycosylation site" description="N-linked (GlcNAc...) asparagine; by host" evidence="1">
    <location>
        <position position="147"/>
    </location>
</feature>
<feature type="glycosylation site" description="N-linked (GlcNAc...) asparagine; by host" evidence="1">
    <location>
        <position position="160"/>
    </location>
</feature>
<evidence type="ECO:0000255" key="1"/>
<name>E325_ADECC</name>
<accession>Q65959</accession>